<evidence type="ECO:0000255" key="1">
    <source>
        <dbReference type="HAMAP-Rule" id="MF_01382"/>
    </source>
</evidence>
<gene>
    <name evidence="1" type="primary">secA</name>
    <name type="ordered locus">DP2750</name>
</gene>
<feature type="chain" id="PRO_0000320793" description="Protein translocase subunit SecA">
    <location>
        <begin position="1"/>
        <end position="850"/>
    </location>
</feature>
<feature type="binding site" evidence="1">
    <location>
        <position position="87"/>
    </location>
    <ligand>
        <name>ATP</name>
        <dbReference type="ChEBI" id="CHEBI:30616"/>
    </ligand>
</feature>
<feature type="binding site" evidence="1">
    <location>
        <begin position="105"/>
        <end position="109"/>
    </location>
    <ligand>
        <name>ATP</name>
        <dbReference type="ChEBI" id="CHEBI:30616"/>
    </ligand>
</feature>
<feature type="binding site" evidence="1">
    <location>
        <position position="494"/>
    </location>
    <ligand>
        <name>ATP</name>
        <dbReference type="ChEBI" id="CHEBI:30616"/>
    </ligand>
</feature>
<feature type="binding site" evidence="1">
    <location>
        <position position="834"/>
    </location>
    <ligand>
        <name>Zn(2+)</name>
        <dbReference type="ChEBI" id="CHEBI:29105"/>
    </ligand>
</feature>
<feature type="binding site" evidence="1">
    <location>
        <position position="836"/>
    </location>
    <ligand>
        <name>Zn(2+)</name>
        <dbReference type="ChEBI" id="CHEBI:29105"/>
    </ligand>
</feature>
<feature type="binding site" evidence="1">
    <location>
        <position position="845"/>
    </location>
    <ligand>
        <name>Zn(2+)</name>
        <dbReference type="ChEBI" id="CHEBI:29105"/>
    </ligand>
</feature>
<feature type="binding site" evidence="1">
    <location>
        <position position="846"/>
    </location>
    <ligand>
        <name>Zn(2+)</name>
        <dbReference type="ChEBI" id="CHEBI:29105"/>
    </ligand>
</feature>
<sequence length="850" mass="96331">MIGKMLTKVFGSKNDRVLKQIRPLVTRINDLESTIKPLGDAALVAKTVEFKERIAKGESLKDLLPESFAVMREAASRVLGERHYDVQLVGGIILHKGRIAEMKTGEGKTLTSTLPVYLNGLSGKGVHVVTVNDYLAARDAEWMGQVYDFLGMSWDKIIHGMDDVERRAAYAADITYGTNNEFGFDYLRDNMKFELDDFCQRGFNFAIVDEVDSILIDEARTPLIISGPAEMSTELYDNINSIMYNFKVEEHYTVDEKARTVSLTDDGIGLGEELLDLENLCDPSSIEQLHHLNQALKAHVLFQRDVDYIVNDGQVVIVDEFTGRTMEGRRYSDGLHQALEAKENVKVEQENQTLAAITFQNYFRMYDKLAGMTGTADTEAAEFKKIYDLDVVLMPTNQPMVRDDYADVIFKNEDAKYRAVVREIAEMHEKGRPVLVGTISIDVSEKIADMLTKAKVPHEVLNAKQHAREAEIITAAGQVGRVTIATNMAGRGTDIKLGEGVRELGGLHIVATSRHESRRIDNQLRGRAGRQGDPGSSRFYLSLEDDLLRIFGSGRVSGIMDKLGMEEDEPIEHGMISRAIENAQRKVEGHNFDIRKHLLEYDDVMNKQREIVYQQRYEVLAGADVSAEIQEMVNDIVRNLASEFSDERLDSLDWDWAGCLERLQEAFSVQPEWSEETRTDIKFEELRDLIAGVVAQKYREQEEENGADTQRQLEKILLLQVVDGLWKDHLLSMDYLKEGIGLRGYGQKNPLNEYKREAFQLFGHLMETVKSQVVSSLMRVRVVHENDVDRMEEERRRRHEEEMQRIQALVPAGNADEEHQQPAHVDKIGRNTPCPCGSGKKYKKCCGKLS</sequence>
<proteinExistence type="inferred from homology"/>
<reference key="1">
    <citation type="journal article" date="2004" name="Environ. Microbiol.">
        <title>The genome of Desulfotalea psychrophila, a sulfate-reducing bacterium from permanently cold Arctic sediments.</title>
        <authorList>
            <person name="Rabus R."/>
            <person name="Ruepp A."/>
            <person name="Frickey T."/>
            <person name="Rattei T."/>
            <person name="Fartmann B."/>
            <person name="Stark M."/>
            <person name="Bauer M."/>
            <person name="Zibat A."/>
            <person name="Lombardot T."/>
            <person name="Becker I."/>
            <person name="Amann J."/>
            <person name="Gellner K."/>
            <person name="Teeling H."/>
            <person name="Leuschner W.D."/>
            <person name="Gloeckner F.-O."/>
            <person name="Lupas A.N."/>
            <person name="Amann R."/>
            <person name="Klenk H.-P."/>
        </authorList>
    </citation>
    <scope>NUCLEOTIDE SEQUENCE [LARGE SCALE GENOMIC DNA]</scope>
    <source>
        <strain>DSM 12343 / LSv54</strain>
    </source>
</reference>
<protein>
    <recommendedName>
        <fullName evidence="1">Protein translocase subunit SecA</fullName>
        <ecNumber evidence="1">7.4.2.8</ecNumber>
    </recommendedName>
</protein>
<organism>
    <name type="scientific">Desulfotalea psychrophila (strain LSv54 / DSM 12343)</name>
    <dbReference type="NCBI Taxonomy" id="177439"/>
    <lineage>
        <taxon>Bacteria</taxon>
        <taxon>Pseudomonadati</taxon>
        <taxon>Thermodesulfobacteriota</taxon>
        <taxon>Desulfobulbia</taxon>
        <taxon>Desulfobulbales</taxon>
        <taxon>Desulfocapsaceae</taxon>
        <taxon>Desulfotalea</taxon>
    </lineage>
</organism>
<keyword id="KW-0067">ATP-binding</keyword>
<keyword id="KW-0997">Cell inner membrane</keyword>
<keyword id="KW-1003">Cell membrane</keyword>
<keyword id="KW-0963">Cytoplasm</keyword>
<keyword id="KW-0472">Membrane</keyword>
<keyword id="KW-0479">Metal-binding</keyword>
<keyword id="KW-0547">Nucleotide-binding</keyword>
<keyword id="KW-0653">Protein transport</keyword>
<keyword id="KW-1185">Reference proteome</keyword>
<keyword id="KW-1278">Translocase</keyword>
<keyword id="KW-0811">Translocation</keyword>
<keyword id="KW-0813">Transport</keyword>
<keyword id="KW-0862">Zinc</keyword>
<name>SECA_DESPS</name>
<comment type="function">
    <text evidence="1">Part of the Sec protein translocase complex. Interacts with the SecYEG preprotein conducting channel. Has a central role in coupling the hydrolysis of ATP to the transfer of proteins into and across the cell membrane, serving as an ATP-driven molecular motor driving the stepwise translocation of polypeptide chains across the membrane.</text>
</comment>
<comment type="catalytic activity">
    <reaction evidence="1">
        <text>ATP + H2O + cellular proteinSide 1 = ADP + phosphate + cellular proteinSide 2.</text>
        <dbReference type="EC" id="7.4.2.8"/>
    </reaction>
</comment>
<comment type="cofactor">
    <cofactor evidence="1">
        <name>Zn(2+)</name>
        <dbReference type="ChEBI" id="CHEBI:29105"/>
    </cofactor>
    <text evidence="1">May bind 1 zinc ion per subunit.</text>
</comment>
<comment type="subunit">
    <text evidence="1">Monomer and homodimer. Part of the essential Sec protein translocation apparatus which comprises SecA, SecYEG and auxiliary proteins SecDF-YajC and YidC.</text>
</comment>
<comment type="subcellular location">
    <subcellularLocation>
        <location evidence="1">Cell inner membrane</location>
        <topology evidence="1">Peripheral membrane protein</topology>
        <orientation evidence="1">Cytoplasmic side</orientation>
    </subcellularLocation>
    <subcellularLocation>
        <location evidence="1">Cytoplasm</location>
    </subcellularLocation>
    <text evidence="1">Distribution is 50-50.</text>
</comment>
<comment type="similarity">
    <text evidence="1">Belongs to the SecA family.</text>
</comment>
<dbReference type="EC" id="7.4.2.8" evidence="1"/>
<dbReference type="EMBL" id="CR522870">
    <property type="protein sequence ID" value="CAG37479.1"/>
    <property type="molecule type" value="Genomic_DNA"/>
</dbReference>
<dbReference type="RefSeq" id="WP_011189991.1">
    <property type="nucleotide sequence ID" value="NC_006138.1"/>
</dbReference>
<dbReference type="SMR" id="Q6AJK1"/>
<dbReference type="STRING" id="177439.DP2750"/>
<dbReference type="KEGG" id="dps:DP2750"/>
<dbReference type="eggNOG" id="COG0653">
    <property type="taxonomic scope" value="Bacteria"/>
</dbReference>
<dbReference type="HOGENOM" id="CLU_005314_3_0_7"/>
<dbReference type="OrthoDB" id="9805579at2"/>
<dbReference type="Proteomes" id="UP000000602">
    <property type="component" value="Chromosome"/>
</dbReference>
<dbReference type="GO" id="GO:0031522">
    <property type="term" value="C:cell envelope Sec protein transport complex"/>
    <property type="evidence" value="ECO:0007669"/>
    <property type="project" value="TreeGrafter"/>
</dbReference>
<dbReference type="GO" id="GO:0005829">
    <property type="term" value="C:cytosol"/>
    <property type="evidence" value="ECO:0007669"/>
    <property type="project" value="TreeGrafter"/>
</dbReference>
<dbReference type="GO" id="GO:0005886">
    <property type="term" value="C:plasma membrane"/>
    <property type="evidence" value="ECO:0007669"/>
    <property type="project" value="UniProtKB-SubCell"/>
</dbReference>
<dbReference type="GO" id="GO:0005524">
    <property type="term" value="F:ATP binding"/>
    <property type="evidence" value="ECO:0007669"/>
    <property type="project" value="UniProtKB-UniRule"/>
</dbReference>
<dbReference type="GO" id="GO:0046872">
    <property type="term" value="F:metal ion binding"/>
    <property type="evidence" value="ECO:0007669"/>
    <property type="project" value="UniProtKB-KW"/>
</dbReference>
<dbReference type="GO" id="GO:0008564">
    <property type="term" value="F:protein-exporting ATPase activity"/>
    <property type="evidence" value="ECO:0007669"/>
    <property type="project" value="UniProtKB-EC"/>
</dbReference>
<dbReference type="GO" id="GO:0065002">
    <property type="term" value="P:intracellular protein transmembrane transport"/>
    <property type="evidence" value="ECO:0007669"/>
    <property type="project" value="UniProtKB-UniRule"/>
</dbReference>
<dbReference type="GO" id="GO:0017038">
    <property type="term" value="P:protein import"/>
    <property type="evidence" value="ECO:0007669"/>
    <property type="project" value="InterPro"/>
</dbReference>
<dbReference type="GO" id="GO:0006605">
    <property type="term" value="P:protein targeting"/>
    <property type="evidence" value="ECO:0007669"/>
    <property type="project" value="UniProtKB-UniRule"/>
</dbReference>
<dbReference type="GO" id="GO:0043952">
    <property type="term" value="P:protein transport by the Sec complex"/>
    <property type="evidence" value="ECO:0007669"/>
    <property type="project" value="TreeGrafter"/>
</dbReference>
<dbReference type="CDD" id="cd17928">
    <property type="entry name" value="DEXDc_SecA"/>
    <property type="match status" value="1"/>
</dbReference>
<dbReference type="CDD" id="cd18803">
    <property type="entry name" value="SF2_C_secA"/>
    <property type="match status" value="1"/>
</dbReference>
<dbReference type="FunFam" id="3.40.50.300:FF:000429">
    <property type="entry name" value="Preprotein translocase subunit SecA"/>
    <property type="match status" value="1"/>
</dbReference>
<dbReference type="FunFam" id="3.90.1440.10:FF:000001">
    <property type="entry name" value="Preprotein translocase subunit SecA"/>
    <property type="match status" value="1"/>
</dbReference>
<dbReference type="FunFam" id="1.10.3060.10:FF:000003">
    <property type="entry name" value="Protein translocase subunit SecA"/>
    <property type="match status" value="1"/>
</dbReference>
<dbReference type="FunFam" id="3.40.50.300:FF:000334">
    <property type="entry name" value="Protein translocase subunit SecA"/>
    <property type="match status" value="1"/>
</dbReference>
<dbReference type="Gene3D" id="1.10.3060.10">
    <property type="entry name" value="Helical scaffold and wing domains of SecA"/>
    <property type="match status" value="1"/>
</dbReference>
<dbReference type="Gene3D" id="3.40.50.300">
    <property type="entry name" value="P-loop containing nucleotide triphosphate hydrolases"/>
    <property type="match status" value="3"/>
</dbReference>
<dbReference type="Gene3D" id="3.90.1440.10">
    <property type="entry name" value="SecA, preprotein cross-linking domain"/>
    <property type="match status" value="1"/>
</dbReference>
<dbReference type="HAMAP" id="MF_01382">
    <property type="entry name" value="SecA"/>
    <property type="match status" value="1"/>
</dbReference>
<dbReference type="InterPro" id="IPR014001">
    <property type="entry name" value="Helicase_ATP-bd"/>
</dbReference>
<dbReference type="InterPro" id="IPR001650">
    <property type="entry name" value="Helicase_C-like"/>
</dbReference>
<dbReference type="InterPro" id="IPR027417">
    <property type="entry name" value="P-loop_NTPase"/>
</dbReference>
<dbReference type="InterPro" id="IPR004027">
    <property type="entry name" value="SEC_C_motif"/>
</dbReference>
<dbReference type="InterPro" id="IPR000185">
    <property type="entry name" value="SecA"/>
</dbReference>
<dbReference type="InterPro" id="IPR020937">
    <property type="entry name" value="SecA_CS"/>
</dbReference>
<dbReference type="InterPro" id="IPR011115">
    <property type="entry name" value="SecA_DEAD"/>
</dbReference>
<dbReference type="InterPro" id="IPR014018">
    <property type="entry name" value="SecA_motor_DEAD"/>
</dbReference>
<dbReference type="InterPro" id="IPR011130">
    <property type="entry name" value="SecA_preprotein_X-link_dom"/>
</dbReference>
<dbReference type="InterPro" id="IPR044722">
    <property type="entry name" value="SecA_SF2_C"/>
</dbReference>
<dbReference type="InterPro" id="IPR011116">
    <property type="entry name" value="SecA_Wing/Scaffold"/>
</dbReference>
<dbReference type="InterPro" id="IPR036266">
    <property type="entry name" value="SecA_Wing/Scaffold_sf"/>
</dbReference>
<dbReference type="InterPro" id="IPR036670">
    <property type="entry name" value="SecA_X-link_sf"/>
</dbReference>
<dbReference type="NCBIfam" id="NF006630">
    <property type="entry name" value="PRK09200.1"/>
    <property type="match status" value="1"/>
</dbReference>
<dbReference type="NCBIfam" id="NF009538">
    <property type="entry name" value="PRK12904.1"/>
    <property type="match status" value="1"/>
</dbReference>
<dbReference type="NCBIfam" id="TIGR00963">
    <property type="entry name" value="secA"/>
    <property type="match status" value="1"/>
</dbReference>
<dbReference type="PANTHER" id="PTHR30612:SF0">
    <property type="entry name" value="CHLOROPLAST PROTEIN-TRANSPORTING ATPASE"/>
    <property type="match status" value="1"/>
</dbReference>
<dbReference type="PANTHER" id="PTHR30612">
    <property type="entry name" value="SECA INNER MEMBRANE COMPONENT OF SEC PROTEIN SECRETION SYSTEM"/>
    <property type="match status" value="1"/>
</dbReference>
<dbReference type="Pfam" id="PF21090">
    <property type="entry name" value="P-loop_SecA"/>
    <property type="match status" value="1"/>
</dbReference>
<dbReference type="Pfam" id="PF02810">
    <property type="entry name" value="SEC-C"/>
    <property type="match status" value="1"/>
</dbReference>
<dbReference type="Pfam" id="PF07517">
    <property type="entry name" value="SecA_DEAD"/>
    <property type="match status" value="1"/>
</dbReference>
<dbReference type="Pfam" id="PF01043">
    <property type="entry name" value="SecA_PP_bind"/>
    <property type="match status" value="1"/>
</dbReference>
<dbReference type="Pfam" id="PF07516">
    <property type="entry name" value="SecA_SW"/>
    <property type="match status" value="1"/>
</dbReference>
<dbReference type="PRINTS" id="PR00906">
    <property type="entry name" value="SECA"/>
</dbReference>
<dbReference type="SMART" id="SM00957">
    <property type="entry name" value="SecA_DEAD"/>
    <property type="match status" value="1"/>
</dbReference>
<dbReference type="SMART" id="SM00958">
    <property type="entry name" value="SecA_PP_bind"/>
    <property type="match status" value="1"/>
</dbReference>
<dbReference type="SUPFAM" id="SSF81886">
    <property type="entry name" value="Helical scaffold and wing domains of SecA"/>
    <property type="match status" value="1"/>
</dbReference>
<dbReference type="SUPFAM" id="SSF52540">
    <property type="entry name" value="P-loop containing nucleoside triphosphate hydrolases"/>
    <property type="match status" value="2"/>
</dbReference>
<dbReference type="SUPFAM" id="SSF81767">
    <property type="entry name" value="Pre-protein crosslinking domain of SecA"/>
    <property type="match status" value="1"/>
</dbReference>
<dbReference type="PROSITE" id="PS01312">
    <property type="entry name" value="SECA"/>
    <property type="match status" value="1"/>
</dbReference>
<dbReference type="PROSITE" id="PS51196">
    <property type="entry name" value="SECA_MOTOR_DEAD"/>
    <property type="match status" value="1"/>
</dbReference>
<accession>Q6AJK1</accession>